<feature type="chain" id="PRO_0000263455" description="Elongation factor G 2">
    <location>
        <begin position="1"/>
        <end position="688"/>
    </location>
</feature>
<feature type="domain" description="tr-type G">
    <location>
        <begin position="7"/>
        <end position="282"/>
    </location>
</feature>
<feature type="binding site" evidence="1">
    <location>
        <begin position="16"/>
        <end position="23"/>
    </location>
    <ligand>
        <name>GTP</name>
        <dbReference type="ChEBI" id="CHEBI:37565"/>
    </ligand>
</feature>
<feature type="binding site" evidence="1">
    <location>
        <begin position="80"/>
        <end position="84"/>
    </location>
    <ligand>
        <name>GTP</name>
        <dbReference type="ChEBI" id="CHEBI:37565"/>
    </ligand>
</feature>
<feature type="binding site" evidence="1">
    <location>
        <begin position="134"/>
        <end position="137"/>
    </location>
    <ligand>
        <name>GTP</name>
        <dbReference type="ChEBI" id="CHEBI:37565"/>
    </ligand>
</feature>
<keyword id="KW-0963">Cytoplasm</keyword>
<keyword id="KW-0251">Elongation factor</keyword>
<keyword id="KW-0342">GTP-binding</keyword>
<keyword id="KW-0547">Nucleotide-binding</keyword>
<keyword id="KW-0648">Protein biosynthesis</keyword>
<keyword id="KW-1185">Reference proteome</keyword>
<dbReference type="EMBL" id="CP000148">
    <property type="protein sequence ID" value="ABB32742.1"/>
    <property type="molecule type" value="Genomic_DNA"/>
</dbReference>
<dbReference type="SMR" id="Q39SN2"/>
<dbReference type="STRING" id="269799.Gmet_2521"/>
<dbReference type="KEGG" id="gme:Gmet_2521"/>
<dbReference type="eggNOG" id="COG0480">
    <property type="taxonomic scope" value="Bacteria"/>
</dbReference>
<dbReference type="HOGENOM" id="CLU_002794_4_1_7"/>
<dbReference type="Proteomes" id="UP000007073">
    <property type="component" value="Chromosome"/>
</dbReference>
<dbReference type="GO" id="GO:0005737">
    <property type="term" value="C:cytoplasm"/>
    <property type="evidence" value="ECO:0007669"/>
    <property type="project" value="UniProtKB-SubCell"/>
</dbReference>
<dbReference type="GO" id="GO:0005525">
    <property type="term" value="F:GTP binding"/>
    <property type="evidence" value="ECO:0007669"/>
    <property type="project" value="UniProtKB-UniRule"/>
</dbReference>
<dbReference type="GO" id="GO:0003924">
    <property type="term" value="F:GTPase activity"/>
    <property type="evidence" value="ECO:0007669"/>
    <property type="project" value="InterPro"/>
</dbReference>
<dbReference type="GO" id="GO:0003746">
    <property type="term" value="F:translation elongation factor activity"/>
    <property type="evidence" value="ECO:0007669"/>
    <property type="project" value="UniProtKB-UniRule"/>
</dbReference>
<dbReference type="GO" id="GO:0032790">
    <property type="term" value="P:ribosome disassembly"/>
    <property type="evidence" value="ECO:0007669"/>
    <property type="project" value="TreeGrafter"/>
</dbReference>
<dbReference type="CDD" id="cd01886">
    <property type="entry name" value="EF-G"/>
    <property type="match status" value="1"/>
</dbReference>
<dbReference type="CDD" id="cd16262">
    <property type="entry name" value="EFG_III"/>
    <property type="match status" value="1"/>
</dbReference>
<dbReference type="CDD" id="cd01680">
    <property type="entry name" value="EFG_like_IV"/>
    <property type="match status" value="1"/>
</dbReference>
<dbReference type="CDD" id="cd03713">
    <property type="entry name" value="EFG_mtEFG_C"/>
    <property type="match status" value="1"/>
</dbReference>
<dbReference type="CDD" id="cd04088">
    <property type="entry name" value="EFG_mtEFG_II"/>
    <property type="match status" value="1"/>
</dbReference>
<dbReference type="FunFam" id="3.30.70.240:FF:000001">
    <property type="entry name" value="Elongation factor G"/>
    <property type="match status" value="1"/>
</dbReference>
<dbReference type="FunFam" id="3.30.70.870:FF:000001">
    <property type="entry name" value="Elongation factor G"/>
    <property type="match status" value="1"/>
</dbReference>
<dbReference type="FunFam" id="3.40.50.300:FF:000029">
    <property type="entry name" value="Elongation factor G"/>
    <property type="match status" value="1"/>
</dbReference>
<dbReference type="Gene3D" id="3.30.230.10">
    <property type="match status" value="1"/>
</dbReference>
<dbReference type="Gene3D" id="3.30.70.240">
    <property type="match status" value="1"/>
</dbReference>
<dbReference type="Gene3D" id="3.30.70.870">
    <property type="entry name" value="Elongation Factor G (Translational Gtpase), domain 3"/>
    <property type="match status" value="1"/>
</dbReference>
<dbReference type="Gene3D" id="3.40.50.300">
    <property type="entry name" value="P-loop containing nucleotide triphosphate hydrolases"/>
    <property type="match status" value="1"/>
</dbReference>
<dbReference type="Gene3D" id="2.40.30.10">
    <property type="entry name" value="Translation factors"/>
    <property type="match status" value="1"/>
</dbReference>
<dbReference type="HAMAP" id="MF_00054_B">
    <property type="entry name" value="EF_G_EF_2_B"/>
    <property type="match status" value="1"/>
</dbReference>
<dbReference type="InterPro" id="IPR041095">
    <property type="entry name" value="EFG_II"/>
</dbReference>
<dbReference type="InterPro" id="IPR009022">
    <property type="entry name" value="EFG_III"/>
</dbReference>
<dbReference type="InterPro" id="IPR035647">
    <property type="entry name" value="EFG_III/V"/>
</dbReference>
<dbReference type="InterPro" id="IPR035649">
    <property type="entry name" value="EFG_V"/>
</dbReference>
<dbReference type="InterPro" id="IPR000640">
    <property type="entry name" value="EFG_V-like"/>
</dbReference>
<dbReference type="InterPro" id="IPR004161">
    <property type="entry name" value="EFTu-like_2"/>
</dbReference>
<dbReference type="InterPro" id="IPR031157">
    <property type="entry name" value="G_TR_CS"/>
</dbReference>
<dbReference type="InterPro" id="IPR027417">
    <property type="entry name" value="P-loop_NTPase"/>
</dbReference>
<dbReference type="InterPro" id="IPR020568">
    <property type="entry name" value="Ribosomal_Su5_D2-typ_SF"/>
</dbReference>
<dbReference type="InterPro" id="IPR014721">
    <property type="entry name" value="Ribsml_uS5_D2-typ_fold_subgr"/>
</dbReference>
<dbReference type="InterPro" id="IPR005225">
    <property type="entry name" value="Small_GTP-bd"/>
</dbReference>
<dbReference type="InterPro" id="IPR000795">
    <property type="entry name" value="T_Tr_GTP-bd_dom"/>
</dbReference>
<dbReference type="InterPro" id="IPR009000">
    <property type="entry name" value="Transl_B-barrel_sf"/>
</dbReference>
<dbReference type="InterPro" id="IPR004540">
    <property type="entry name" value="Transl_elong_EFG/EF2"/>
</dbReference>
<dbReference type="InterPro" id="IPR005517">
    <property type="entry name" value="Transl_elong_EFG/EF2_IV"/>
</dbReference>
<dbReference type="NCBIfam" id="TIGR00484">
    <property type="entry name" value="EF-G"/>
    <property type="match status" value="1"/>
</dbReference>
<dbReference type="NCBIfam" id="NF009381">
    <property type="entry name" value="PRK12740.1-5"/>
    <property type="match status" value="1"/>
</dbReference>
<dbReference type="NCBIfam" id="TIGR00231">
    <property type="entry name" value="small_GTP"/>
    <property type="match status" value="1"/>
</dbReference>
<dbReference type="PANTHER" id="PTHR43261:SF1">
    <property type="entry name" value="RIBOSOME-RELEASING FACTOR 2, MITOCHONDRIAL"/>
    <property type="match status" value="1"/>
</dbReference>
<dbReference type="PANTHER" id="PTHR43261">
    <property type="entry name" value="TRANSLATION ELONGATION FACTOR G-RELATED"/>
    <property type="match status" value="1"/>
</dbReference>
<dbReference type="Pfam" id="PF00679">
    <property type="entry name" value="EFG_C"/>
    <property type="match status" value="1"/>
</dbReference>
<dbReference type="Pfam" id="PF14492">
    <property type="entry name" value="EFG_III"/>
    <property type="match status" value="1"/>
</dbReference>
<dbReference type="Pfam" id="PF03764">
    <property type="entry name" value="EFG_IV"/>
    <property type="match status" value="1"/>
</dbReference>
<dbReference type="Pfam" id="PF00009">
    <property type="entry name" value="GTP_EFTU"/>
    <property type="match status" value="1"/>
</dbReference>
<dbReference type="Pfam" id="PF03144">
    <property type="entry name" value="GTP_EFTU_D2"/>
    <property type="match status" value="1"/>
</dbReference>
<dbReference type="PRINTS" id="PR00315">
    <property type="entry name" value="ELONGATNFCT"/>
</dbReference>
<dbReference type="SMART" id="SM00838">
    <property type="entry name" value="EFG_C"/>
    <property type="match status" value="1"/>
</dbReference>
<dbReference type="SMART" id="SM00889">
    <property type="entry name" value="EFG_IV"/>
    <property type="match status" value="1"/>
</dbReference>
<dbReference type="SUPFAM" id="SSF54980">
    <property type="entry name" value="EF-G C-terminal domain-like"/>
    <property type="match status" value="2"/>
</dbReference>
<dbReference type="SUPFAM" id="SSF52540">
    <property type="entry name" value="P-loop containing nucleoside triphosphate hydrolases"/>
    <property type="match status" value="1"/>
</dbReference>
<dbReference type="SUPFAM" id="SSF54211">
    <property type="entry name" value="Ribosomal protein S5 domain 2-like"/>
    <property type="match status" value="1"/>
</dbReference>
<dbReference type="SUPFAM" id="SSF50447">
    <property type="entry name" value="Translation proteins"/>
    <property type="match status" value="1"/>
</dbReference>
<dbReference type="PROSITE" id="PS00301">
    <property type="entry name" value="G_TR_1"/>
    <property type="match status" value="1"/>
</dbReference>
<dbReference type="PROSITE" id="PS51722">
    <property type="entry name" value="G_TR_2"/>
    <property type="match status" value="1"/>
</dbReference>
<organism>
    <name type="scientific">Geobacter metallireducens (strain ATCC 53774 / DSM 7210 / GS-15)</name>
    <dbReference type="NCBI Taxonomy" id="269799"/>
    <lineage>
        <taxon>Bacteria</taxon>
        <taxon>Pseudomonadati</taxon>
        <taxon>Thermodesulfobacteriota</taxon>
        <taxon>Desulfuromonadia</taxon>
        <taxon>Geobacterales</taxon>
        <taxon>Geobacteraceae</taxon>
        <taxon>Geobacter</taxon>
    </lineage>
</organism>
<name>EFG2_GEOMG</name>
<reference key="1">
    <citation type="journal article" date="2009" name="BMC Microbiol.">
        <title>The genome sequence of Geobacter metallireducens: features of metabolism, physiology and regulation common and dissimilar to Geobacter sulfurreducens.</title>
        <authorList>
            <person name="Aklujkar M."/>
            <person name="Krushkal J."/>
            <person name="DiBartolo G."/>
            <person name="Lapidus A."/>
            <person name="Land M.L."/>
            <person name="Lovley D.R."/>
        </authorList>
    </citation>
    <scope>NUCLEOTIDE SEQUENCE [LARGE SCALE GENOMIC DNA]</scope>
    <source>
        <strain>ATCC 53774 / DSM 7210 / GS-15</strain>
    </source>
</reference>
<evidence type="ECO:0000255" key="1">
    <source>
        <dbReference type="HAMAP-Rule" id="MF_00054"/>
    </source>
</evidence>
<accession>Q39SN2</accession>
<gene>
    <name evidence="1" type="primary">fusA2</name>
    <name type="ordered locus">Gmet_2521</name>
</gene>
<proteinExistence type="inferred from homology"/>
<sequence>MQHPPLDSIRNIGIISHIDAGKTTVSERILFYTGETHKIGEVHDGEAVMDWMPQEQERGITITSTATVCRWGAWWINLIDTPGHIDFTIEVERSLRALDGAVAIFSAVEGVQPQSESVWRQADRYQVPRICFINKMDRVGADYRETLRQMEEKLGARPVLLQLPVGVEASFAGVVDLIAGEFLTFSEADQGSTVERHPIPAEIAGEAMAVREELIEAAADFDDAILADFLEGTAIAAERIRAAIRKGTIACRIVPVFLGTALRNRGIQPLLDAVAAYLPSPRDIPPVTGQRPDGEAVDSLPCDPAGPLCALAFKVQADEGRKLTYLRIYSGTVKAGGALWNSNRGCFEKAARLFRMHAHKREPIDEALAGDIVAAIGLKEVLTGDTLCDPAHKVLLSGLTVPEPVVALAVEPRGVDDRDKLLPALEKLQWEDPTFRVHEDEETGQTILTGMGELHLEVVTDRLGREFGVQVKTGRPQVVYRETITRPAERQEVFRTEFEGKVQGGEVHLRLAPLHRGEGVRIVVPPAEVLGITRELHTALTESLTRGASTGCVTGYPLTDLEVRVITVPVEQGVTTEGGVRAAAGRGLMRAARDGAPTLLEPLMDLEIITPTEYAGKVLGSVQQKRGRVEGIITQGNTEAIRALVPLAEMFGYMTELRSATKGRGGFTMEFSRFDQAPASVLQQFGLA</sequence>
<comment type="function">
    <text evidence="1">Catalyzes the GTP-dependent ribosomal translocation step during translation elongation. During this step, the ribosome changes from the pre-translocational (PRE) to the post-translocational (POST) state as the newly formed A-site-bound peptidyl-tRNA and P-site-bound deacylated tRNA move to the P and E sites, respectively. Catalyzes the coordinated movement of the two tRNA molecules, the mRNA and conformational changes in the ribosome.</text>
</comment>
<comment type="subcellular location">
    <subcellularLocation>
        <location evidence="1">Cytoplasm</location>
    </subcellularLocation>
</comment>
<comment type="similarity">
    <text evidence="1">Belongs to the TRAFAC class translation factor GTPase superfamily. Classic translation factor GTPase family. EF-G/EF-2 subfamily.</text>
</comment>
<protein>
    <recommendedName>
        <fullName evidence="1">Elongation factor G 2</fullName>
        <shortName evidence="1">EF-G 2</shortName>
    </recommendedName>
</protein>